<gene>
    <name evidence="3" type="primary">pchD</name>
    <name evidence="5" type="ordered locus">PA14_09240</name>
</gene>
<reference key="1">
    <citation type="journal article" date="2006" name="Genome Biol.">
        <title>Genomic analysis reveals that Pseudomonas aeruginosa virulence is combinatorial.</title>
        <authorList>
            <person name="Lee D.G."/>
            <person name="Urbach J.M."/>
            <person name="Wu G."/>
            <person name="Liberati N.T."/>
            <person name="Feinbaum R.L."/>
            <person name="Miyata S."/>
            <person name="Diggins L.T."/>
            <person name="He J."/>
            <person name="Saucier M."/>
            <person name="Deziel E."/>
            <person name="Friedman L."/>
            <person name="Li L."/>
            <person name="Grills G."/>
            <person name="Montgomery K."/>
            <person name="Kucherlapati R."/>
            <person name="Rahme L.G."/>
            <person name="Ausubel F.M."/>
        </authorList>
    </citation>
    <scope>NUCLEOTIDE SEQUENCE [LARGE SCALE GENOMIC DNA]</scope>
    <source>
        <strain>UCBPP-PA14</strain>
    </source>
</reference>
<reference key="2">
    <citation type="journal article" date="1999" name="Biochemistry">
        <title>Assembly of the Pseudomonas aeruginosa nonribosomal peptide siderophore pyochelin: In vitro reconstitution of aryl-4, 2-bisthiazoline synthetase activity from PchD, PchE, and PchF.</title>
        <authorList>
            <person name="Quadri L.E."/>
            <person name="Keating T.A."/>
            <person name="Patel H.M."/>
            <person name="Walsh C.T."/>
        </authorList>
    </citation>
    <scope>FUNCTION</scope>
    <scope>CATALYTIC ACTIVITY</scope>
    <scope>BIOPHYSICOCHEMICAL PROPERTIES</scope>
    <scope>PATHWAY</scope>
    <source>
        <strain>UCBPP-PA14</strain>
    </source>
</reference>
<feature type="chain" id="PRO_0000454823" description="Pyochelin synthase PchD">
    <location>
        <begin position="1"/>
        <end position="547"/>
    </location>
</feature>
<accession>A0A0H2ZF83</accession>
<sequence>MTSSPATPSAVDDAPDWPAAFVRRYLDAGHWQDQNFAEALAASAARHPRRIALCDDDQRLSYADLLQRCRRLAAGLRQAGLAHGDTVVLHLPNGIAFVETCFALFQLGVRPVLALPAHRQHEISGFCRFAEAKAYIGAERIDGFDPRPMARELLASGACRMALIHGEAEAPLQALAPLYQADALEDCAARAEDIACFQLSGGTTGTPKLIPRRHREYLYNVRASAEVCGFDEHTVYLTGLPMAHNFTLCCPGVIGTLLAGGRVVVSQRADPEHCFALIARERVTHTALVPPLAMLWLDAQESRRADLSSLRLLQVGGSRLGSSAAQRVEPVLGCQLQQVLGMAEGLICYTRLDDPPERVLHTQGRPLSPDDEVRVVDAEGREVGPGEVGELTVRGPYTIRGYYRLPEHNAKAFSADGFYRTGDRVSRDKDGYLVVEGRDKDQINRGGEKIAAEEVENLLIAHPQVHDATVVAMPDSLLGERTCAFVIPRQPAPSALKLKQYLHACGLAAFKVPDRIELVPAFPQTGIGKISKKDLRERLRRELEARA</sequence>
<comment type="function">
    <text evidence="1 2">Involved in the biosynthesis of the siderophore pyochelin (PubMed:10555976). Specifically adenylates salicylate and loads it onto the holo form of PchE via a thioester linkage to the phosphopanthetheine moiety (PubMed:10555976). Is also involved in the synthesis of the antifungal antibiotic dihydroaeruginoic acid (Dha or hydroxyphenyl-thiazolinyl-carboxylate), a precursor of pyochelin (By similarity).</text>
</comment>
<comment type="catalytic activity">
    <reaction evidence="2">
        <text>salicylate + holo-[ACP] + ATP = salicyl-[ACP] + AMP + diphosphate</text>
        <dbReference type="Rhea" id="RHEA:61648"/>
        <dbReference type="Rhea" id="RHEA-COMP:9685"/>
        <dbReference type="Rhea" id="RHEA-COMP:19022"/>
        <dbReference type="ChEBI" id="CHEBI:30616"/>
        <dbReference type="ChEBI" id="CHEBI:30762"/>
        <dbReference type="ChEBI" id="CHEBI:33019"/>
        <dbReference type="ChEBI" id="CHEBI:64479"/>
        <dbReference type="ChEBI" id="CHEBI:86464"/>
        <dbReference type="ChEBI" id="CHEBI:456215"/>
        <dbReference type="EC" id="6.2.1.61"/>
    </reaction>
    <physiologicalReaction direction="left-to-right" evidence="2">
        <dbReference type="Rhea" id="RHEA:61649"/>
    </physiologicalReaction>
</comment>
<comment type="biophysicochemical properties">
    <kinetics>
        <KM evidence="2">2.8 uM for salicylate</KM>
        <text evidence="2">kcat is 74 min(-1) with salicylate as substrate.</text>
    </kinetics>
</comment>
<comment type="pathway">
    <text evidence="2">Siderophore biosynthesis.</text>
</comment>
<comment type="pathway">
    <text evidence="1">Antifungal biosynthesis.</text>
</comment>
<comment type="similarity">
    <text evidence="4">Belongs to the ATP-dependent AMP-binding enzyme family.</text>
</comment>
<name>PCHD_PSEAB</name>
<keyword id="KW-0045">Antibiotic biosynthesis</keyword>
<keyword id="KW-0436">Ligase</keyword>
<proteinExistence type="evidence at protein level"/>
<protein>
    <recommendedName>
        <fullName evidence="4">Pyochelin synthase PchD</fullName>
        <ecNumber evidence="2">6.2.1.61</ecNumber>
    </recommendedName>
    <alternativeName>
        <fullName evidence="4">Nonribosomal peptide synthase PchD</fullName>
    </alternativeName>
    <alternativeName>
        <fullName evidence="4">Salicylate--[aryl-carrier protein] ligase</fullName>
    </alternativeName>
</protein>
<evidence type="ECO:0000250" key="1">
    <source>
        <dbReference type="UniProtKB" id="Q9HWG3"/>
    </source>
</evidence>
<evidence type="ECO:0000269" key="2">
    <source>
    </source>
</evidence>
<evidence type="ECO:0000303" key="3">
    <source>
    </source>
</evidence>
<evidence type="ECO:0000305" key="4"/>
<evidence type="ECO:0000312" key="5">
    <source>
        <dbReference type="EMBL" id="ABJ13501.1"/>
    </source>
</evidence>
<dbReference type="EC" id="6.2.1.61" evidence="2"/>
<dbReference type="EMBL" id="CP000438">
    <property type="protein sequence ID" value="ABJ13501.1"/>
    <property type="molecule type" value="Genomic_DNA"/>
</dbReference>
<dbReference type="RefSeq" id="WP_003137468.1">
    <property type="nucleotide sequence ID" value="NZ_CP034244.1"/>
</dbReference>
<dbReference type="SMR" id="A0A0H2ZF83"/>
<dbReference type="KEGG" id="pau:PA14_09240"/>
<dbReference type="HOGENOM" id="CLU_000022_59_7_6"/>
<dbReference type="BioCyc" id="PAER208963:G1G74-771-MONOMER"/>
<dbReference type="Proteomes" id="UP000000653">
    <property type="component" value="Chromosome"/>
</dbReference>
<dbReference type="GO" id="GO:0016878">
    <property type="term" value="F:acid-thiol ligase activity"/>
    <property type="evidence" value="ECO:0007669"/>
    <property type="project" value="UniProtKB-ARBA"/>
</dbReference>
<dbReference type="GO" id="GO:0017000">
    <property type="term" value="P:antibiotic biosynthetic process"/>
    <property type="evidence" value="ECO:0007669"/>
    <property type="project" value="UniProtKB-KW"/>
</dbReference>
<dbReference type="CDD" id="cd05920">
    <property type="entry name" value="23DHB-AMP_lg"/>
    <property type="match status" value="1"/>
</dbReference>
<dbReference type="FunFam" id="3.30.300.30:FF:000008">
    <property type="entry name" value="2,3-dihydroxybenzoate-AMP ligase"/>
    <property type="match status" value="1"/>
</dbReference>
<dbReference type="FunFam" id="2.30.38.10:FF:000003">
    <property type="entry name" value="Vibriobactin-specific 2,3-dihydroxybenzoate-AMP ligase"/>
    <property type="match status" value="1"/>
</dbReference>
<dbReference type="FunFam" id="3.40.50.980:FF:000003">
    <property type="entry name" value="Vibriobactin-specific 2,3-dihydroxybenzoate-AMP ligase"/>
    <property type="match status" value="1"/>
</dbReference>
<dbReference type="Gene3D" id="3.30.300.30">
    <property type="match status" value="1"/>
</dbReference>
<dbReference type="Gene3D" id="3.40.50.980">
    <property type="match status" value="2"/>
</dbReference>
<dbReference type="Gene3D" id="2.30.38.10">
    <property type="entry name" value="Luciferase, Domain 3"/>
    <property type="match status" value="1"/>
</dbReference>
<dbReference type="InterPro" id="IPR025110">
    <property type="entry name" value="AMP-bd_C"/>
</dbReference>
<dbReference type="InterPro" id="IPR045851">
    <property type="entry name" value="AMP-bd_C_sf"/>
</dbReference>
<dbReference type="InterPro" id="IPR020845">
    <property type="entry name" value="AMP-binding_CS"/>
</dbReference>
<dbReference type="InterPro" id="IPR000873">
    <property type="entry name" value="AMP-dep_synth/lig_dom"/>
</dbReference>
<dbReference type="InterPro" id="IPR050237">
    <property type="entry name" value="ATP-dep_AMP-bd_enzyme"/>
</dbReference>
<dbReference type="PANTHER" id="PTHR43767">
    <property type="entry name" value="LONG-CHAIN-FATTY-ACID--COA LIGASE"/>
    <property type="match status" value="1"/>
</dbReference>
<dbReference type="PANTHER" id="PTHR43767:SF1">
    <property type="entry name" value="NONRIBOSOMAL PEPTIDE SYNTHASE PES1 (EUROFUNG)-RELATED"/>
    <property type="match status" value="1"/>
</dbReference>
<dbReference type="Pfam" id="PF00501">
    <property type="entry name" value="AMP-binding"/>
    <property type="match status" value="1"/>
</dbReference>
<dbReference type="Pfam" id="PF13193">
    <property type="entry name" value="AMP-binding_C"/>
    <property type="match status" value="1"/>
</dbReference>
<dbReference type="SUPFAM" id="SSF56801">
    <property type="entry name" value="Acetyl-CoA synthetase-like"/>
    <property type="match status" value="1"/>
</dbReference>
<dbReference type="PROSITE" id="PS00455">
    <property type="entry name" value="AMP_BINDING"/>
    <property type="match status" value="1"/>
</dbReference>
<organism>
    <name type="scientific">Pseudomonas aeruginosa (strain UCBPP-PA14)</name>
    <dbReference type="NCBI Taxonomy" id="208963"/>
    <lineage>
        <taxon>Bacteria</taxon>
        <taxon>Pseudomonadati</taxon>
        <taxon>Pseudomonadota</taxon>
        <taxon>Gammaproteobacteria</taxon>
        <taxon>Pseudomonadales</taxon>
        <taxon>Pseudomonadaceae</taxon>
        <taxon>Pseudomonas</taxon>
    </lineage>
</organism>